<protein>
    <recommendedName>
        <fullName evidence="1">Probable potassium transport system protein Kup</fullName>
    </recommendedName>
</protein>
<name>KUP_CHLCH</name>
<organism>
    <name type="scientific">Chlorobium chlorochromatii (strain CaD3)</name>
    <dbReference type="NCBI Taxonomy" id="340177"/>
    <lineage>
        <taxon>Bacteria</taxon>
        <taxon>Pseudomonadati</taxon>
        <taxon>Chlorobiota</taxon>
        <taxon>Chlorobiia</taxon>
        <taxon>Chlorobiales</taxon>
        <taxon>Chlorobiaceae</taxon>
        <taxon>Chlorobium/Pelodictyon group</taxon>
        <taxon>Chlorobium</taxon>
    </lineage>
</organism>
<reference key="1">
    <citation type="submission" date="2005-08" db="EMBL/GenBank/DDBJ databases">
        <title>Complete sequence of Chlorobium chlorochromatii CaD3.</title>
        <authorList>
            <consortium name="US DOE Joint Genome Institute"/>
            <person name="Copeland A."/>
            <person name="Lucas S."/>
            <person name="Lapidus A."/>
            <person name="Barry K."/>
            <person name="Detter J.C."/>
            <person name="Glavina T."/>
            <person name="Hammon N."/>
            <person name="Israni S."/>
            <person name="Pitluck S."/>
            <person name="Bryant D."/>
            <person name="Schmutz J."/>
            <person name="Larimer F."/>
            <person name="Land M."/>
            <person name="Kyrpides N."/>
            <person name="Ivanova N."/>
            <person name="Richardson P."/>
        </authorList>
    </citation>
    <scope>NUCLEOTIDE SEQUENCE [LARGE SCALE GENOMIC DNA]</scope>
    <source>
        <strain>CaD3</strain>
    </source>
</reference>
<keyword id="KW-0997">Cell inner membrane</keyword>
<keyword id="KW-1003">Cell membrane</keyword>
<keyword id="KW-0406">Ion transport</keyword>
<keyword id="KW-0472">Membrane</keyword>
<keyword id="KW-0630">Potassium</keyword>
<keyword id="KW-0633">Potassium transport</keyword>
<keyword id="KW-0769">Symport</keyword>
<keyword id="KW-0812">Transmembrane</keyword>
<keyword id="KW-1133">Transmembrane helix</keyword>
<keyword id="KW-0813">Transport</keyword>
<proteinExistence type="inferred from homology"/>
<comment type="function">
    <text evidence="1">Transport of potassium into the cell. Likely operates as a K(+):H(+) symporter.</text>
</comment>
<comment type="catalytic activity">
    <reaction evidence="1">
        <text>K(+)(in) + H(+)(in) = K(+)(out) + H(+)(out)</text>
        <dbReference type="Rhea" id="RHEA:28490"/>
        <dbReference type="ChEBI" id="CHEBI:15378"/>
        <dbReference type="ChEBI" id="CHEBI:29103"/>
    </reaction>
    <physiologicalReaction direction="right-to-left" evidence="1">
        <dbReference type="Rhea" id="RHEA:28492"/>
    </physiologicalReaction>
</comment>
<comment type="subcellular location">
    <subcellularLocation>
        <location evidence="1">Cell inner membrane</location>
        <topology evidence="1">Multi-pass membrane protein</topology>
    </subcellularLocation>
</comment>
<comment type="similarity">
    <text evidence="1">Belongs to the HAK/KUP transporter (TC 2.A.72) family.</text>
</comment>
<dbReference type="EMBL" id="CP000108">
    <property type="protein sequence ID" value="ABB28976.1"/>
    <property type="molecule type" value="Genomic_DNA"/>
</dbReference>
<dbReference type="SMR" id="Q3APU9"/>
<dbReference type="STRING" id="340177.Cag_1725"/>
<dbReference type="KEGG" id="cch:Cag_1725"/>
<dbReference type="eggNOG" id="COG3158">
    <property type="taxonomic scope" value="Bacteria"/>
</dbReference>
<dbReference type="HOGENOM" id="CLU_008142_4_2_10"/>
<dbReference type="OrthoDB" id="9805577at2"/>
<dbReference type="GO" id="GO:0005886">
    <property type="term" value="C:plasma membrane"/>
    <property type="evidence" value="ECO:0007669"/>
    <property type="project" value="UniProtKB-SubCell"/>
</dbReference>
<dbReference type="GO" id="GO:0015079">
    <property type="term" value="F:potassium ion transmembrane transporter activity"/>
    <property type="evidence" value="ECO:0007669"/>
    <property type="project" value="UniProtKB-UniRule"/>
</dbReference>
<dbReference type="GO" id="GO:0015293">
    <property type="term" value="F:symporter activity"/>
    <property type="evidence" value="ECO:0007669"/>
    <property type="project" value="UniProtKB-UniRule"/>
</dbReference>
<dbReference type="HAMAP" id="MF_01522">
    <property type="entry name" value="Kup"/>
    <property type="match status" value="1"/>
</dbReference>
<dbReference type="InterPro" id="IPR003855">
    <property type="entry name" value="K+_transporter"/>
</dbReference>
<dbReference type="InterPro" id="IPR053952">
    <property type="entry name" value="K_trans_C"/>
</dbReference>
<dbReference type="InterPro" id="IPR053951">
    <property type="entry name" value="K_trans_N"/>
</dbReference>
<dbReference type="InterPro" id="IPR023051">
    <property type="entry name" value="Kup"/>
</dbReference>
<dbReference type="PANTHER" id="PTHR30540:SF79">
    <property type="entry name" value="LOW AFFINITY POTASSIUM TRANSPORT SYSTEM PROTEIN KUP"/>
    <property type="match status" value="1"/>
</dbReference>
<dbReference type="PANTHER" id="PTHR30540">
    <property type="entry name" value="OSMOTIC STRESS POTASSIUM TRANSPORTER"/>
    <property type="match status" value="1"/>
</dbReference>
<dbReference type="Pfam" id="PF02705">
    <property type="entry name" value="K_trans"/>
    <property type="match status" value="1"/>
</dbReference>
<dbReference type="Pfam" id="PF22776">
    <property type="entry name" value="K_trans_C"/>
    <property type="match status" value="1"/>
</dbReference>
<accession>Q3APU9</accession>
<evidence type="ECO:0000255" key="1">
    <source>
        <dbReference type="HAMAP-Rule" id="MF_01522"/>
    </source>
</evidence>
<feature type="chain" id="PRO_0000279776" description="Probable potassium transport system protein Kup">
    <location>
        <begin position="1"/>
        <end position="620"/>
    </location>
</feature>
<feature type="transmembrane region" description="Helical" evidence="1">
    <location>
        <begin position="7"/>
        <end position="27"/>
    </location>
</feature>
<feature type="transmembrane region" description="Helical" evidence="1">
    <location>
        <begin position="44"/>
        <end position="64"/>
    </location>
</feature>
<feature type="transmembrane region" description="Helical" evidence="1">
    <location>
        <begin position="98"/>
        <end position="118"/>
    </location>
</feature>
<feature type="transmembrane region" description="Helical" evidence="1">
    <location>
        <begin position="135"/>
        <end position="155"/>
    </location>
</feature>
<feature type="transmembrane region" description="Helical" evidence="1">
    <location>
        <begin position="166"/>
        <end position="186"/>
    </location>
</feature>
<feature type="transmembrane region" description="Helical" evidence="1">
    <location>
        <begin position="201"/>
        <end position="221"/>
    </location>
</feature>
<feature type="transmembrane region" description="Helical" evidence="1">
    <location>
        <begin position="245"/>
        <end position="265"/>
    </location>
</feature>
<feature type="transmembrane region" description="Helical" evidence="1">
    <location>
        <begin position="278"/>
        <end position="298"/>
    </location>
</feature>
<feature type="transmembrane region" description="Helical" evidence="1">
    <location>
        <begin position="335"/>
        <end position="355"/>
    </location>
</feature>
<feature type="transmembrane region" description="Helical" evidence="1">
    <location>
        <begin position="361"/>
        <end position="381"/>
    </location>
</feature>
<feature type="transmembrane region" description="Helical" evidence="1">
    <location>
        <begin position="394"/>
        <end position="414"/>
    </location>
</feature>
<feature type="transmembrane region" description="Helical" evidence="1">
    <location>
        <begin position="417"/>
        <end position="437"/>
    </location>
</feature>
<sequence length="620" mass="68105">MKRLGGLALAALGVVFGDIGTSPLYAIRECFHGDYGIAINEANVFGVLSLLVWSLLLIVSLKYLTFIMKADNDGEGGILALTALLIRHCKKNGGSERFFLIAIGLFGAALLYGDGMITPAISVLSALEGVQMVAPAFHDLIIPATVTVLVILFLFQHHGTARVGTLFGPVILLWFVVLGVLGLVEILRYPQILQAFFPWHGIMFLLNNQLHGFMVLGAVFLSVTGAEALYADMGHFGKRPIRLTWAFLVLPALLLNYFGQGALLLDSPADAHHPFYGLVPSWGLIPMVILSTSATIIASQALITGVFSLTQQAIQLGYLPRLTVTHTSAKHMGQIYVPAANWSLMVATISLVIGFGSSSKLAAAYGVAVTATMLISTILFYYVARDLWRWNKSVLNVMIVVFLLVDLAFFGASASKLFHGAWFPLVIAAVMFTVMMTWKQGRGLLLKQLQDRTLTVEEFMSSLALQPPYRTNGQAVYLTANPDLVPLAMLHNLRHNKVLHSEVALFHFSTERVPRVPNNRKVEVVKLGDGFYKVVARYGFLEYPTIRQVLALANHQGLHFKPEAISFFLSREKIVAGVKSKMTIWRKKLFAVMSRNAISATSYYDLPPGQVIEIGLMVQI</sequence>
<gene>
    <name evidence="1" type="primary">kup</name>
    <name type="ordered locus">Cag_1725</name>
</gene>